<keyword id="KW-0067">ATP-binding</keyword>
<keyword id="KW-0963">Cytoplasm</keyword>
<keyword id="KW-0460">Magnesium</keyword>
<keyword id="KW-0479">Metal-binding</keyword>
<keyword id="KW-0547">Nucleotide-binding</keyword>
<keyword id="KW-0554">One-carbon metabolism</keyword>
<keyword id="KW-0630">Potassium</keyword>
<keyword id="KW-0808">Transferase</keyword>
<name>METK_LACJO</name>
<accession>Q74KS4</accession>
<protein>
    <recommendedName>
        <fullName evidence="1">S-adenosylmethionine synthase</fullName>
        <shortName evidence="1">AdoMet synthase</shortName>
        <ecNumber evidence="1">2.5.1.6</ecNumber>
    </recommendedName>
    <alternativeName>
        <fullName evidence="1">MAT</fullName>
    </alternativeName>
    <alternativeName>
        <fullName evidence="1">Methionine adenosyltransferase</fullName>
    </alternativeName>
</protein>
<gene>
    <name evidence="1" type="primary">metK</name>
    <name type="ordered locus">LJ_0677</name>
</gene>
<organism>
    <name type="scientific">Lactobacillus johnsonii (strain CNCM I-12250 / La1 / NCC 533)</name>
    <dbReference type="NCBI Taxonomy" id="257314"/>
    <lineage>
        <taxon>Bacteria</taxon>
        <taxon>Bacillati</taxon>
        <taxon>Bacillota</taxon>
        <taxon>Bacilli</taxon>
        <taxon>Lactobacillales</taxon>
        <taxon>Lactobacillaceae</taxon>
        <taxon>Lactobacillus</taxon>
    </lineage>
</organism>
<reference key="1">
    <citation type="journal article" date="2004" name="Proc. Natl. Acad. Sci. U.S.A.">
        <title>The genome sequence of the probiotic intestinal bacterium Lactobacillus johnsonii NCC 533.</title>
        <authorList>
            <person name="Pridmore R.D."/>
            <person name="Berger B."/>
            <person name="Desiere F."/>
            <person name="Vilanova D."/>
            <person name="Barretto C."/>
            <person name="Pittet A.-C."/>
            <person name="Zwahlen M.-C."/>
            <person name="Rouvet M."/>
            <person name="Altermann E."/>
            <person name="Barrangou R."/>
            <person name="Mollet B."/>
            <person name="Mercenier A."/>
            <person name="Klaenhammer T."/>
            <person name="Arigoni F."/>
            <person name="Schell M.A."/>
        </authorList>
    </citation>
    <scope>NUCLEOTIDE SEQUENCE [LARGE SCALE GENOMIC DNA]</scope>
    <source>
        <strain>CNCM I-1225 / La1 / NCC 533</strain>
    </source>
</reference>
<sequence>MKKEKRLFTSESVSEGHPDKVADQISDAILDAILAKDPDGRVACETTVTTGLVLVVGEISTSAYVDIQSVVRKTILEIGYNRPELGFDGNNCAILVDIDEQSSDIADGVNESLETRENQQDKDDLDKIGAGDQGLMFGFAIKETPELMPLPISLAHSLMRRVASLRKEGRLDWLRPDAKAQVTVEYDDENKPKRIDTVVISTQTDATVSNDEIREAMIDMVIKKVIPSQYLDKDTKFLINPSGRFVIGGPKGDSGLTGRKIIVDTYGGYARHGGGAFSGKDLTKVDRSASYAARYVAKNIVAAGLAYQCEIQLAYAIGVAHPVSIMVDTHGTSKVSEDLLVEAVRNVFDLRPAGIIEMLNLKRPIYRQTAAYGHFGRTDVDLPWEHTDKVEALKTYVSEHAE</sequence>
<comment type="function">
    <text evidence="1">Catalyzes the formation of S-adenosylmethionine (AdoMet) from methionine and ATP. The overall synthetic reaction is composed of two sequential steps, AdoMet formation and the subsequent tripolyphosphate hydrolysis which occurs prior to release of AdoMet from the enzyme.</text>
</comment>
<comment type="catalytic activity">
    <reaction evidence="1">
        <text>L-methionine + ATP + H2O = S-adenosyl-L-methionine + phosphate + diphosphate</text>
        <dbReference type="Rhea" id="RHEA:21080"/>
        <dbReference type="ChEBI" id="CHEBI:15377"/>
        <dbReference type="ChEBI" id="CHEBI:30616"/>
        <dbReference type="ChEBI" id="CHEBI:33019"/>
        <dbReference type="ChEBI" id="CHEBI:43474"/>
        <dbReference type="ChEBI" id="CHEBI:57844"/>
        <dbReference type="ChEBI" id="CHEBI:59789"/>
        <dbReference type="EC" id="2.5.1.6"/>
    </reaction>
</comment>
<comment type="cofactor">
    <cofactor evidence="1">
        <name>Mg(2+)</name>
        <dbReference type="ChEBI" id="CHEBI:18420"/>
    </cofactor>
    <text evidence="1">Binds 2 divalent ions per subunit.</text>
</comment>
<comment type="cofactor">
    <cofactor evidence="1">
        <name>K(+)</name>
        <dbReference type="ChEBI" id="CHEBI:29103"/>
    </cofactor>
    <text evidence="1">Binds 1 potassium ion per subunit.</text>
</comment>
<comment type="pathway">
    <text evidence="1">Amino-acid biosynthesis; S-adenosyl-L-methionine biosynthesis; S-adenosyl-L-methionine from L-methionine: step 1/1.</text>
</comment>
<comment type="subunit">
    <text evidence="1">Homotetramer; dimer of dimers.</text>
</comment>
<comment type="subcellular location">
    <subcellularLocation>
        <location evidence="1">Cytoplasm</location>
    </subcellularLocation>
</comment>
<comment type="similarity">
    <text evidence="1">Belongs to the AdoMet synthase family.</text>
</comment>
<feature type="chain" id="PRO_0000174534" description="S-adenosylmethionine synthase">
    <location>
        <begin position="1"/>
        <end position="402"/>
    </location>
</feature>
<feature type="region of interest" description="Flexible loop" evidence="1">
    <location>
        <begin position="101"/>
        <end position="111"/>
    </location>
</feature>
<feature type="binding site" description="in other chain" evidence="1">
    <location>
        <position position="17"/>
    </location>
    <ligand>
        <name>ATP</name>
        <dbReference type="ChEBI" id="CHEBI:30616"/>
        <note>ligand shared between two neighboring subunits</note>
    </ligand>
</feature>
<feature type="binding site" evidence="1">
    <location>
        <position position="19"/>
    </location>
    <ligand>
        <name>Mg(2+)</name>
        <dbReference type="ChEBI" id="CHEBI:18420"/>
    </ligand>
</feature>
<feature type="binding site" evidence="1">
    <location>
        <position position="45"/>
    </location>
    <ligand>
        <name>K(+)</name>
        <dbReference type="ChEBI" id="CHEBI:29103"/>
    </ligand>
</feature>
<feature type="binding site" description="in other chain" evidence="1">
    <location>
        <position position="58"/>
    </location>
    <ligand>
        <name>L-methionine</name>
        <dbReference type="ChEBI" id="CHEBI:57844"/>
        <note>ligand shared between two neighboring subunits</note>
    </ligand>
</feature>
<feature type="binding site" description="in other chain" evidence="1">
    <location>
        <position position="101"/>
    </location>
    <ligand>
        <name>L-methionine</name>
        <dbReference type="ChEBI" id="CHEBI:57844"/>
        <note>ligand shared between two neighboring subunits</note>
    </ligand>
</feature>
<feature type="binding site" description="in other chain" evidence="1">
    <location>
        <begin position="177"/>
        <end position="179"/>
    </location>
    <ligand>
        <name>ATP</name>
        <dbReference type="ChEBI" id="CHEBI:30616"/>
        <note>ligand shared between two neighboring subunits</note>
    </ligand>
</feature>
<feature type="binding site" description="in other chain" evidence="1">
    <location>
        <begin position="244"/>
        <end position="245"/>
    </location>
    <ligand>
        <name>ATP</name>
        <dbReference type="ChEBI" id="CHEBI:30616"/>
        <note>ligand shared between two neighboring subunits</note>
    </ligand>
</feature>
<feature type="binding site" evidence="1">
    <location>
        <position position="253"/>
    </location>
    <ligand>
        <name>ATP</name>
        <dbReference type="ChEBI" id="CHEBI:30616"/>
        <note>ligand shared between two neighboring subunits</note>
    </ligand>
</feature>
<feature type="binding site" evidence="1">
    <location>
        <position position="253"/>
    </location>
    <ligand>
        <name>L-methionine</name>
        <dbReference type="ChEBI" id="CHEBI:57844"/>
        <note>ligand shared between two neighboring subunits</note>
    </ligand>
</feature>
<feature type="binding site" description="in other chain" evidence="1">
    <location>
        <begin position="259"/>
        <end position="260"/>
    </location>
    <ligand>
        <name>ATP</name>
        <dbReference type="ChEBI" id="CHEBI:30616"/>
        <note>ligand shared between two neighboring subunits</note>
    </ligand>
</feature>
<feature type="binding site" evidence="1">
    <location>
        <position position="276"/>
    </location>
    <ligand>
        <name>ATP</name>
        <dbReference type="ChEBI" id="CHEBI:30616"/>
        <note>ligand shared between two neighboring subunits</note>
    </ligand>
</feature>
<feature type="binding site" evidence="1">
    <location>
        <position position="280"/>
    </location>
    <ligand>
        <name>ATP</name>
        <dbReference type="ChEBI" id="CHEBI:30616"/>
        <note>ligand shared between two neighboring subunits</note>
    </ligand>
</feature>
<feature type="binding site" description="in other chain" evidence="1">
    <location>
        <position position="284"/>
    </location>
    <ligand>
        <name>L-methionine</name>
        <dbReference type="ChEBI" id="CHEBI:57844"/>
        <note>ligand shared between two neighboring subunits</note>
    </ligand>
</feature>
<evidence type="ECO:0000255" key="1">
    <source>
        <dbReference type="HAMAP-Rule" id="MF_00086"/>
    </source>
</evidence>
<proteinExistence type="inferred from homology"/>
<dbReference type="EC" id="2.5.1.6" evidence="1"/>
<dbReference type="EMBL" id="AE017198">
    <property type="protein sequence ID" value="AAS08495.1"/>
    <property type="molecule type" value="Genomic_DNA"/>
</dbReference>
<dbReference type="RefSeq" id="WP_011161625.1">
    <property type="nucleotide sequence ID" value="NC_005362.1"/>
</dbReference>
<dbReference type="SMR" id="Q74KS4"/>
<dbReference type="KEGG" id="ljo:LJ_0677"/>
<dbReference type="PATRIC" id="fig|257314.6.peg.530"/>
<dbReference type="eggNOG" id="COG0192">
    <property type="taxonomic scope" value="Bacteria"/>
</dbReference>
<dbReference type="HOGENOM" id="CLU_041802_1_1_9"/>
<dbReference type="UniPathway" id="UPA00315">
    <property type="reaction ID" value="UER00080"/>
</dbReference>
<dbReference type="Proteomes" id="UP000000581">
    <property type="component" value="Chromosome"/>
</dbReference>
<dbReference type="GO" id="GO:0005737">
    <property type="term" value="C:cytoplasm"/>
    <property type="evidence" value="ECO:0007669"/>
    <property type="project" value="UniProtKB-SubCell"/>
</dbReference>
<dbReference type="GO" id="GO:0005524">
    <property type="term" value="F:ATP binding"/>
    <property type="evidence" value="ECO:0007669"/>
    <property type="project" value="UniProtKB-UniRule"/>
</dbReference>
<dbReference type="GO" id="GO:0000287">
    <property type="term" value="F:magnesium ion binding"/>
    <property type="evidence" value="ECO:0007669"/>
    <property type="project" value="UniProtKB-UniRule"/>
</dbReference>
<dbReference type="GO" id="GO:0004478">
    <property type="term" value="F:methionine adenosyltransferase activity"/>
    <property type="evidence" value="ECO:0007669"/>
    <property type="project" value="UniProtKB-UniRule"/>
</dbReference>
<dbReference type="GO" id="GO:0006730">
    <property type="term" value="P:one-carbon metabolic process"/>
    <property type="evidence" value="ECO:0007669"/>
    <property type="project" value="UniProtKB-KW"/>
</dbReference>
<dbReference type="GO" id="GO:0006556">
    <property type="term" value="P:S-adenosylmethionine biosynthetic process"/>
    <property type="evidence" value="ECO:0007669"/>
    <property type="project" value="UniProtKB-UniRule"/>
</dbReference>
<dbReference type="CDD" id="cd18079">
    <property type="entry name" value="S-AdoMet_synt"/>
    <property type="match status" value="1"/>
</dbReference>
<dbReference type="FunFam" id="3.30.300.10:FF:000003">
    <property type="entry name" value="S-adenosylmethionine synthase"/>
    <property type="match status" value="1"/>
</dbReference>
<dbReference type="Gene3D" id="3.30.300.10">
    <property type="match status" value="3"/>
</dbReference>
<dbReference type="HAMAP" id="MF_00086">
    <property type="entry name" value="S_AdoMet_synth1"/>
    <property type="match status" value="1"/>
</dbReference>
<dbReference type="InterPro" id="IPR022631">
    <property type="entry name" value="ADOMET_SYNTHASE_CS"/>
</dbReference>
<dbReference type="InterPro" id="IPR022630">
    <property type="entry name" value="S-AdoMet_synt_C"/>
</dbReference>
<dbReference type="InterPro" id="IPR022629">
    <property type="entry name" value="S-AdoMet_synt_central"/>
</dbReference>
<dbReference type="InterPro" id="IPR022628">
    <property type="entry name" value="S-AdoMet_synt_N"/>
</dbReference>
<dbReference type="InterPro" id="IPR002133">
    <property type="entry name" value="S-AdoMet_synthetase"/>
</dbReference>
<dbReference type="InterPro" id="IPR022636">
    <property type="entry name" value="S-AdoMet_synthetase_sfam"/>
</dbReference>
<dbReference type="NCBIfam" id="TIGR01034">
    <property type="entry name" value="metK"/>
    <property type="match status" value="1"/>
</dbReference>
<dbReference type="PANTHER" id="PTHR11964">
    <property type="entry name" value="S-ADENOSYLMETHIONINE SYNTHETASE"/>
    <property type="match status" value="1"/>
</dbReference>
<dbReference type="Pfam" id="PF02773">
    <property type="entry name" value="S-AdoMet_synt_C"/>
    <property type="match status" value="1"/>
</dbReference>
<dbReference type="Pfam" id="PF02772">
    <property type="entry name" value="S-AdoMet_synt_M"/>
    <property type="match status" value="1"/>
</dbReference>
<dbReference type="Pfam" id="PF00438">
    <property type="entry name" value="S-AdoMet_synt_N"/>
    <property type="match status" value="1"/>
</dbReference>
<dbReference type="PIRSF" id="PIRSF000497">
    <property type="entry name" value="MAT"/>
    <property type="match status" value="1"/>
</dbReference>
<dbReference type="SUPFAM" id="SSF55973">
    <property type="entry name" value="S-adenosylmethionine synthetase"/>
    <property type="match status" value="3"/>
</dbReference>
<dbReference type="PROSITE" id="PS00376">
    <property type="entry name" value="ADOMET_SYNTHASE_1"/>
    <property type="match status" value="1"/>
</dbReference>
<dbReference type="PROSITE" id="PS00377">
    <property type="entry name" value="ADOMET_SYNTHASE_2"/>
    <property type="match status" value="1"/>
</dbReference>